<comment type="function">
    <text evidence="1">Na(+)/H(+) antiporter that extrudes sodium in exchange for external protons.</text>
</comment>
<comment type="catalytic activity">
    <reaction evidence="1">
        <text>2 Na(+)(in) + 3 H(+)(out) = 2 Na(+)(out) + 3 H(+)(in)</text>
        <dbReference type="Rhea" id="RHEA:29247"/>
        <dbReference type="ChEBI" id="CHEBI:15378"/>
        <dbReference type="ChEBI" id="CHEBI:29101"/>
    </reaction>
    <physiologicalReaction direction="left-to-right" evidence="1">
        <dbReference type="Rhea" id="RHEA:29248"/>
    </physiologicalReaction>
</comment>
<comment type="subcellular location">
    <subcellularLocation>
        <location evidence="1">Cell inner membrane</location>
        <topology evidence="1">Multi-pass membrane protein</topology>
    </subcellularLocation>
</comment>
<comment type="similarity">
    <text evidence="1">Belongs to the NhaB Na(+)/H(+) (TC 2.A.34) antiporter family.</text>
</comment>
<name>NHAB_YERPB</name>
<protein>
    <recommendedName>
        <fullName evidence="1">Na(+)/H(+) antiporter NhaB</fullName>
    </recommendedName>
    <alternativeName>
        <fullName evidence="1">Sodium/proton antiporter NhaB</fullName>
    </alternativeName>
</protein>
<organism>
    <name type="scientific">Yersinia pseudotuberculosis serotype IB (strain PB1/+)</name>
    <dbReference type="NCBI Taxonomy" id="502801"/>
    <lineage>
        <taxon>Bacteria</taxon>
        <taxon>Pseudomonadati</taxon>
        <taxon>Pseudomonadota</taxon>
        <taxon>Gammaproteobacteria</taxon>
        <taxon>Enterobacterales</taxon>
        <taxon>Yersiniaceae</taxon>
        <taxon>Yersinia</taxon>
    </lineage>
</organism>
<dbReference type="EMBL" id="CP001048">
    <property type="protein sequence ID" value="ACC89096.1"/>
    <property type="molecule type" value="Genomic_DNA"/>
</dbReference>
<dbReference type="RefSeq" id="WP_011192424.1">
    <property type="nucleotide sequence ID" value="NZ_CP009780.1"/>
</dbReference>
<dbReference type="SMR" id="B2K3Q0"/>
<dbReference type="GeneID" id="49785937"/>
<dbReference type="KEGG" id="ypb:YPTS_2133"/>
<dbReference type="PATRIC" id="fig|502801.10.peg.1523"/>
<dbReference type="GO" id="GO:0005886">
    <property type="term" value="C:plasma membrane"/>
    <property type="evidence" value="ECO:0007669"/>
    <property type="project" value="UniProtKB-SubCell"/>
</dbReference>
<dbReference type="GO" id="GO:0015385">
    <property type="term" value="F:sodium:proton antiporter activity"/>
    <property type="evidence" value="ECO:0007669"/>
    <property type="project" value="InterPro"/>
</dbReference>
<dbReference type="HAMAP" id="MF_01599">
    <property type="entry name" value="NhaB"/>
    <property type="match status" value="1"/>
</dbReference>
<dbReference type="InterPro" id="IPR004671">
    <property type="entry name" value="Na+/H+_antiporter_NhaB"/>
</dbReference>
<dbReference type="NCBIfam" id="TIGR00774">
    <property type="entry name" value="NhaB"/>
    <property type="match status" value="1"/>
</dbReference>
<dbReference type="NCBIfam" id="NF007093">
    <property type="entry name" value="PRK09547.1"/>
    <property type="match status" value="1"/>
</dbReference>
<dbReference type="PANTHER" id="PTHR43302:SF1">
    <property type="entry name" value="NA(+)_H(+) ANTIPORTER NHAB"/>
    <property type="match status" value="1"/>
</dbReference>
<dbReference type="PANTHER" id="PTHR43302">
    <property type="entry name" value="TRANSPORTER ARSB-RELATED"/>
    <property type="match status" value="1"/>
</dbReference>
<dbReference type="Pfam" id="PF06450">
    <property type="entry name" value="NhaB"/>
    <property type="match status" value="1"/>
</dbReference>
<sequence length="524" mass="57449">MDITNRQAVLKNFLGNSPDWYKLAIMGFLIINPLVFFFVSPFVAGWMLVIEFIFTLAMALKCYPLQPGGLLAIQAVAIGMTSPHQVAEEIANNLEVLLLLVFMVAGIYFMKQLLLFVFTKLLLNIRSKTILSLAFCLASAFLSAFLDALTVIAVVISVSVGFYTIYHNVTSNHSDKDITDDSGIDNQDSHETLEQFRAFLRSLMMHAGVGTALGGVMTMVGEPQNLIIAKSAGWNFADFFIRMLPVTLPVFIFGLLVCLLVEKFKLFGYGAQLPERVRQVLTEYDQQASAKRTKQEKMKLIVQAIIGVWLVLALALHLAEVGLVGLSVIILATSFCGITNEHSLGKAFQEALPFTALLTVFFAVVAVIIEQSLFTPIIQFVLQASPSAQLSLFYLFNGLLSSVSDNVFVGTVYINEARSAFEHGIVSLQQFELLAVAINTGTNLPSVATPNGQAAFLFLLTSALAPLIRLSYGRMVYMALPYTLVMTIVGLLGVEFLLVPMTEWLTQAGWISLPHITNGVAIPH</sequence>
<gene>
    <name evidence="1" type="primary">nhaB</name>
    <name type="ordered locus">YPTS_2133</name>
</gene>
<proteinExistence type="inferred from homology"/>
<evidence type="ECO:0000255" key="1">
    <source>
        <dbReference type="HAMAP-Rule" id="MF_01599"/>
    </source>
</evidence>
<feature type="chain" id="PRO_1000191550" description="Na(+)/H(+) antiporter NhaB">
    <location>
        <begin position="1"/>
        <end position="524"/>
    </location>
</feature>
<feature type="transmembrane region" description="Helical" evidence="1">
    <location>
        <begin position="13"/>
        <end position="33"/>
    </location>
</feature>
<feature type="transmembrane region" description="Helical" evidence="1">
    <location>
        <begin position="98"/>
        <end position="118"/>
    </location>
</feature>
<feature type="transmembrane region" description="Helical" evidence="1">
    <location>
        <begin position="140"/>
        <end position="160"/>
    </location>
</feature>
<feature type="transmembrane region" description="Helical" evidence="1">
    <location>
        <begin position="239"/>
        <end position="259"/>
    </location>
</feature>
<feature type="transmembrane region" description="Helical" evidence="1">
    <location>
        <begin position="304"/>
        <end position="324"/>
    </location>
</feature>
<feature type="transmembrane region" description="Helical" evidence="1">
    <location>
        <begin position="325"/>
        <end position="345"/>
    </location>
</feature>
<feature type="transmembrane region" description="Helical" evidence="1">
    <location>
        <begin position="358"/>
        <end position="378"/>
    </location>
</feature>
<feature type="transmembrane region" description="Helical" evidence="1">
    <location>
        <begin position="448"/>
        <end position="468"/>
    </location>
</feature>
<feature type="transmembrane region" description="Helical" evidence="1">
    <location>
        <begin position="479"/>
        <end position="499"/>
    </location>
</feature>
<keyword id="KW-0050">Antiport</keyword>
<keyword id="KW-0997">Cell inner membrane</keyword>
<keyword id="KW-1003">Cell membrane</keyword>
<keyword id="KW-0406">Ion transport</keyword>
<keyword id="KW-0472">Membrane</keyword>
<keyword id="KW-0915">Sodium</keyword>
<keyword id="KW-0739">Sodium transport</keyword>
<keyword id="KW-0812">Transmembrane</keyword>
<keyword id="KW-1133">Transmembrane helix</keyword>
<keyword id="KW-0813">Transport</keyword>
<reference key="1">
    <citation type="submission" date="2008-04" db="EMBL/GenBank/DDBJ databases">
        <title>Complete sequence of Yersinia pseudotuberculosis PB1/+.</title>
        <authorList>
            <person name="Copeland A."/>
            <person name="Lucas S."/>
            <person name="Lapidus A."/>
            <person name="Glavina del Rio T."/>
            <person name="Dalin E."/>
            <person name="Tice H."/>
            <person name="Bruce D."/>
            <person name="Goodwin L."/>
            <person name="Pitluck S."/>
            <person name="Munk A.C."/>
            <person name="Brettin T."/>
            <person name="Detter J.C."/>
            <person name="Han C."/>
            <person name="Tapia R."/>
            <person name="Schmutz J."/>
            <person name="Larimer F."/>
            <person name="Land M."/>
            <person name="Hauser L."/>
            <person name="Challacombe J.F."/>
            <person name="Green L."/>
            <person name="Lindler L.E."/>
            <person name="Nikolich M.P."/>
            <person name="Richardson P."/>
        </authorList>
    </citation>
    <scope>NUCLEOTIDE SEQUENCE [LARGE SCALE GENOMIC DNA]</scope>
    <source>
        <strain>PB1/+</strain>
    </source>
</reference>
<accession>B2K3Q0</accession>